<dbReference type="EC" id="2.3.1.47"/>
<dbReference type="EMBL" id="FM211192">
    <property type="protein sequence ID" value="CAR71312.1"/>
    <property type="molecule type" value="Genomic_DNA"/>
</dbReference>
<dbReference type="SMR" id="B8ZR84"/>
<dbReference type="KEGG" id="mlb:MLBr01217"/>
<dbReference type="HOGENOM" id="CLU_015846_11_2_11"/>
<dbReference type="UniPathway" id="UPA00078"/>
<dbReference type="Proteomes" id="UP000006900">
    <property type="component" value="Chromosome"/>
</dbReference>
<dbReference type="GO" id="GO:0008710">
    <property type="term" value="F:8-amino-7-oxononanoate synthase activity"/>
    <property type="evidence" value="ECO:0007669"/>
    <property type="project" value="UniProtKB-EC"/>
</dbReference>
<dbReference type="GO" id="GO:0030170">
    <property type="term" value="F:pyridoxal phosphate binding"/>
    <property type="evidence" value="ECO:0007669"/>
    <property type="project" value="InterPro"/>
</dbReference>
<dbReference type="GO" id="GO:0009102">
    <property type="term" value="P:biotin biosynthetic process"/>
    <property type="evidence" value="ECO:0007669"/>
    <property type="project" value="UniProtKB-UniPathway"/>
</dbReference>
<dbReference type="Gene3D" id="3.90.1150.10">
    <property type="entry name" value="Aspartate Aminotransferase, domain 1"/>
    <property type="match status" value="1"/>
</dbReference>
<dbReference type="Gene3D" id="3.40.640.10">
    <property type="entry name" value="Type I PLP-dependent aspartate aminotransferase-like (Major domain)"/>
    <property type="match status" value="1"/>
</dbReference>
<dbReference type="InterPro" id="IPR001917">
    <property type="entry name" value="Aminotrans_II_pyridoxalP_BS"/>
</dbReference>
<dbReference type="InterPro" id="IPR004839">
    <property type="entry name" value="Aminotransferase_I/II_large"/>
</dbReference>
<dbReference type="InterPro" id="IPR050087">
    <property type="entry name" value="AON_synthase_class-II"/>
</dbReference>
<dbReference type="InterPro" id="IPR015424">
    <property type="entry name" value="PyrdxlP-dep_Trfase"/>
</dbReference>
<dbReference type="InterPro" id="IPR015421">
    <property type="entry name" value="PyrdxlP-dep_Trfase_major"/>
</dbReference>
<dbReference type="InterPro" id="IPR015422">
    <property type="entry name" value="PyrdxlP-dep_Trfase_small"/>
</dbReference>
<dbReference type="PANTHER" id="PTHR13693:SF100">
    <property type="entry name" value="8-AMINO-7-OXONONANOATE SYNTHASE"/>
    <property type="match status" value="1"/>
</dbReference>
<dbReference type="PANTHER" id="PTHR13693">
    <property type="entry name" value="CLASS II AMINOTRANSFERASE/8-AMINO-7-OXONONANOATE SYNTHASE"/>
    <property type="match status" value="1"/>
</dbReference>
<dbReference type="Pfam" id="PF00155">
    <property type="entry name" value="Aminotran_1_2"/>
    <property type="match status" value="1"/>
</dbReference>
<dbReference type="SUPFAM" id="SSF53383">
    <property type="entry name" value="PLP-dependent transferases"/>
    <property type="match status" value="1"/>
</dbReference>
<dbReference type="PROSITE" id="PS00599">
    <property type="entry name" value="AA_TRANSFER_CLASS_2"/>
    <property type="match status" value="1"/>
</dbReference>
<sequence length="385" mass="39831">MKVPIETSPLAWLEAVEQQRRGAGLRRSLRPRSAVATELDLASNDYLGLSQHPDVIDGGVAALRVWGAGATGSRLVTGDTILHHELECELAEFVGACVGLLFSSGYAANLGAVVGLSGPGSLIVSDAYSHASLVDACRLSRARVVVTPHCDVDAVDTALRSCHEERAVVVTESVFSADGVLAPVSELHDVCRRHGALLLVDEAHGLGVRGGGRGLVYEVGLAGAPDVVITTTMSKALGSQGGAVLGSSAVRAHLINTARPFIFDTGLAPAAVGAARAALQILKAETWRPEAVLQHARTLAKICDLSELPQSAVVSVVLGDPEVALAAAIACLDAGVRVGCFRPPTVPAGTSRLRLTAHASLDSAKLEVARRVLTDVLGGCCVARR</sequence>
<gene>
    <name type="ordered locus">MLBr01217</name>
</gene>
<reference key="1">
    <citation type="journal article" date="2009" name="Nat. Genet.">
        <title>Comparative genomic and phylogeographic analysis of Mycobacterium leprae.</title>
        <authorList>
            <person name="Monot M."/>
            <person name="Honore N."/>
            <person name="Garnier T."/>
            <person name="Zidane N."/>
            <person name="Sherafi D."/>
            <person name="Paniz-Mondolfi A."/>
            <person name="Matsuoka M."/>
            <person name="Taylor G.M."/>
            <person name="Donoghue H.D."/>
            <person name="Bouwman A."/>
            <person name="Mays S."/>
            <person name="Watson C."/>
            <person name="Lockwood D."/>
            <person name="Khamispour A."/>
            <person name="Dowlati Y."/>
            <person name="Jianping S."/>
            <person name="Rea T.H."/>
            <person name="Vera-Cabrera L."/>
            <person name="Stefani M.M."/>
            <person name="Banu S."/>
            <person name="Macdonald M."/>
            <person name="Sapkota B.R."/>
            <person name="Spencer J.S."/>
            <person name="Thomas J."/>
            <person name="Harshman K."/>
            <person name="Singh P."/>
            <person name="Busso P."/>
            <person name="Gattiker A."/>
            <person name="Rougemont J."/>
            <person name="Brennan P.J."/>
            <person name="Cole S.T."/>
        </authorList>
    </citation>
    <scope>NUCLEOTIDE SEQUENCE [LARGE SCALE GENOMIC DNA]</scope>
    <source>
        <strain>Br4923</strain>
    </source>
</reference>
<organism>
    <name type="scientific">Mycobacterium leprae (strain Br4923)</name>
    <dbReference type="NCBI Taxonomy" id="561304"/>
    <lineage>
        <taxon>Bacteria</taxon>
        <taxon>Bacillati</taxon>
        <taxon>Actinomycetota</taxon>
        <taxon>Actinomycetes</taxon>
        <taxon>Mycobacteriales</taxon>
        <taxon>Mycobacteriaceae</taxon>
        <taxon>Mycobacterium</taxon>
    </lineage>
</organism>
<feature type="chain" id="PRO_0000381036" description="8-amino-7-oxononanoate synthase">
    <location>
        <begin position="1"/>
        <end position="385"/>
    </location>
</feature>
<feature type="binding site" evidence="1">
    <location>
        <position position="27"/>
    </location>
    <ligand>
        <name>substrate</name>
    </ligand>
</feature>
<feature type="binding site" evidence="1">
    <location>
        <begin position="105"/>
        <end position="106"/>
    </location>
    <ligand>
        <name>pyridoxal 5'-phosphate</name>
        <dbReference type="ChEBI" id="CHEBI:597326"/>
    </ligand>
</feature>
<feature type="binding site" evidence="1">
    <location>
        <position position="130"/>
    </location>
    <ligand>
        <name>substrate</name>
    </ligand>
</feature>
<feature type="binding site" evidence="1">
    <location>
        <position position="176"/>
    </location>
    <ligand>
        <name>pyridoxal 5'-phosphate</name>
        <dbReference type="ChEBI" id="CHEBI:597326"/>
    </ligand>
</feature>
<feature type="binding site" evidence="1">
    <location>
        <begin position="201"/>
        <end position="204"/>
    </location>
    <ligand>
        <name>pyridoxal 5'-phosphate</name>
        <dbReference type="ChEBI" id="CHEBI:597326"/>
    </ligand>
</feature>
<feature type="binding site" evidence="1">
    <location>
        <begin position="232"/>
        <end position="235"/>
    </location>
    <ligand>
        <name>pyridoxal 5'-phosphate</name>
        <dbReference type="ChEBI" id="CHEBI:597326"/>
    </ligand>
</feature>
<feature type="binding site" evidence="1">
    <location>
        <position position="345"/>
    </location>
    <ligand>
        <name>substrate</name>
    </ligand>
</feature>
<feature type="modified residue" description="N6-(pyridoxal phosphate)lysine" evidence="1">
    <location>
        <position position="235"/>
    </location>
</feature>
<proteinExistence type="inferred from homology"/>
<keyword id="KW-0012">Acyltransferase</keyword>
<keyword id="KW-0093">Biotin biosynthesis</keyword>
<keyword id="KW-0663">Pyridoxal phosphate</keyword>
<keyword id="KW-0808">Transferase</keyword>
<evidence type="ECO:0000250" key="1"/>
<evidence type="ECO:0000305" key="2"/>
<accession>B8ZR84</accession>
<name>BIOF_MYCLB</name>
<protein>
    <recommendedName>
        <fullName>8-amino-7-oxononanoate synthase</fullName>
        <shortName>AONS</shortName>
        <ecNumber>2.3.1.47</ecNumber>
    </recommendedName>
    <alternativeName>
        <fullName>7-keto-8-amino-pelargonic acid synthase</fullName>
        <shortName>7-KAP synthase</shortName>
        <shortName>KAPA synthase</shortName>
    </alternativeName>
    <alternativeName>
        <fullName>8-amino-7-ketopelargonate synthase</fullName>
    </alternativeName>
    <alternativeName>
        <fullName>Alpha-oxoamine synthase</fullName>
    </alternativeName>
</protein>
<comment type="function">
    <text evidence="1">Catalyzes the decarboxylative condensation of pimeloyl-[acyl-carrier protein] and L-alanine to produce 8-amino-7-oxononanoate (AON), [acyl-carrier protein], and carbon dioxide.</text>
</comment>
<comment type="catalytic activity">
    <reaction>
        <text>6-carboxyhexanoyl-[ACP] + L-alanine + H(+) = (8S)-8-amino-7-oxononanoate + holo-[ACP] + CO2</text>
        <dbReference type="Rhea" id="RHEA:42288"/>
        <dbReference type="Rhea" id="RHEA-COMP:9685"/>
        <dbReference type="Rhea" id="RHEA-COMP:9955"/>
        <dbReference type="ChEBI" id="CHEBI:15378"/>
        <dbReference type="ChEBI" id="CHEBI:16526"/>
        <dbReference type="ChEBI" id="CHEBI:57972"/>
        <dbReference type="ChEBI" id="CHEBI:64479"/>
        <dbReference type="ChEBI" id="CHEBI:78846"/>
        <dbReference type="ChEBI" id="CHEBI:149468"/>
        <dbReference type="EC" id="2.3.1.47"/>
    </reaction>
</comment>
<comment type="cofactor">
    <cofactor evidence="1">
        <name>pyridoxal 5'-phosphate</name>
        <dbReference type="ChEBI" id="CHEBI:597326"/>
    </cofactor>
</comment>
<comment type="pathway">
    <text>Cofactor biosynthesis; biotin biosynthesis.</text>
</comment>
<comment type="subunit">
    <text evidence="1">Homodimer.</text>
</comment>
<comment type="similarity">
    <text evidence="2">Belongs to the class-II pyridoxal-phosphate-dependent aminotransferase family. BioF subfamily.</text>
</comment>